<reference key="1">
    <citation type="journal article" date="1997" name="Oncogene">
        <title>Cloning of human bone morphogenetic protein type IB receptor (BMPR-IB) and its expression in prostate cancer in comparison with other BMPRs.</title>
        <authorList>
            <person name="Ide H."/>
            <person name="Katoh M."/>
            <person name="Sasaki H."/>
            <person name="Yoshida T."/>
            <person name="Aoki K."/>
            <person name="Nawa Y."/>
            <person name="Osada Y."/>
            <person name="Sugimura T."/>
            <person name="Terada M."/>
        </authorList>
    </citation>
    <scope>NUCLEOTIDE SEQUENCE [MRNA] (ISOFORM 1)</scope>
    <source>
        <tissue>Prostate</tissue>
    </source>
</reference>
<reference key="2">
    <citation type="journal article" date="1999" name="Mamm. Genome">
        <title>Chromosomal localization of three human genes encoding bone morphogenetic protein receptors.</title>
        <authorList>
            <person name="Astroem A.-K."/>
            <person name="Jin D.F."/>
            <person name="Imamura T."/>
            <person name="Roijer E."/>
            <person name="Rosenzweig B."/>
            <person name="Miyazono K."/>
            <person name="ten Dijke P."/>
            <person name="Stenman G."/>
        </authorList>
    </citation>
    <scope>NUCLEOTIDE SEQUENCE [MRNA] (ISOFORM 1)</scope>
    <source>
        <tissue>Ovary</tissue>
    </source>
</reference>
<reference key="3">
    <citation type="journal article" date="2004" name="Nat. Genet.">
        <title>Complete sequencing and characterization of 21,243 full-length human cDNAs.</title>
        <authorList>
            <person name="Ota T."/>
            <person name="Suzuki Y."/>
            <person name="Nishikawa T."/>
            <person name="Otsuki T."/>
            <person name="Sugiyama T."/>
            <person name="Irie R."/>
            <person name="Wakamatsu A."/>
            <person name="Hayashi K."/>
            <person name="Sato H."/>
            <person name="Nagai K."/>
            <person name="Kimura K."/>
            <person name="Makita H."/>
            <person name="Sekine M."/>
            <person name="Obayashi M."/>
            <person name="Nishi T."/>
            <person name="Shibahara T."/>
            <person name="Tanaka T."/>
            <person name="Ishii S."/>
            <person name="Yamamoto J."/>
            <person name="Saito K."/>
            <person name="Kawai Y."/>
            <person name="Isono Y."/>
            <person name="Nakamura Y."/>
            <person name="Nagahari K."/>
            <person name="Murakami K."/>
            <person name="Yasuda T."/>
            <person name="Iwayanagi T."/>
            <person name="Wagatsuma M."/>
            <person name="Shiratori A."/>
            <person name="Sudo H."/>
            <person name="Hosoiri T."/>
            <person name="Kaku Y."/>
            <person name="Kodaira H."/>
            <person name="Kondo H."/>
            <person name="Sugawara M."/>
            <person name="Takahashi M."/>
            <person name="Kanda K."/>
            <person name="Yokoi T."/>
            <person name="Furuya T."/>
            <person name="Kikkawa E."/>
            <person name="Omura Y."/>
            <person name="Abe K."/>
            <person name="Kamihara K."/>
            <person name="Katsuta N."/>
            <person name="Sato K."/>
            <person name="Tanikawa M."/>
            <person name="Yamazaki M."/>
            <person name="Ninomiya K."/>
            <person name="Ishibashi T."/>
            <person name="Yamashita H."/>
            <person name="Murakawa K."/>
            <person name="Fujimori K."/>
            <person name="Tanai H."/>
            <person name="Kimata M."/>
            <person name="Watanabe M."/>
            <person name="Hiraoka S."/>
            <person name="Chiba Y."/>
            <person name="Ishida S."/>
            <person name="Ono Y."/>
            <person name="Takiguchi S."/>
            <person name="Watanabe S."/>
            <person name="Yosida M."/>
            <person name="Hotuta T."/>
            <person name="Kusano J."/>
            <person name="Kanehori K."/>
            <person name="Takahashi-Fujii A."/>
            <person name="Hara H."/>
            <person name="Tanase T.-O."/>
            <person name="Nomura Y."/>
            <person name="Togiya S."/>
            <person name="Komai F."/>
            <person name="Hara R."/>
            <person name="Takeuchi K."/>
            <person name="Arita M."/>
            <person name="Imose N."/>
            <person name="Musashino K."/>
            <person name="Yuuki H."/>
            <person name="Oshima A."/>
            <person name="Sasaki N."/>
            <person name="Aotsuka S."/>
            <person name="Yoshikawa Y."/>
            <person name="Matsunawa H."/>
            <person name="Ichihara T."/>
            <person name="Shiohata N."/>
            <person name="Sano S."/>
            <person name="Moriya S."/>
            <person name="Momiyama H."/>
            <person name="Satoh N."/>
            <person name="Takami S."/>
            <person name="Terashima Y."/>
            <person name="Suzuki O."/>
            <person name="Nakagawa S."/>
            <person name="Senoh A."/>
            <person name="Mizoguchi H."/>
            <person name="Goto Y."/>
            <person name="Shimizu F."/>
            <person name="Wakebe H."/>
            <person name="Hishigaki H."/>
            <person name="Watanabe T."/>
            <person name="Sugiyama A."/>
            <person name="Takemoto M."/>
            <person name="Kawakami B."/>
            <person name="Yamazaki M."/>
            <person name="Watanabe K."/>
            <person name="Kumagai A."/>
            <person name="Itakura S."/>
            <person name="Fukuzumi Y."/>
            <person name="Fujimori Y."/>
            <person name="Komiyama M."/>
            <person name="Tashiro H."/>
            <person name="Tanigami A."/>
            <person name="Fujiwara T."/>
            <person name="Ono T."/>
            <person name="Yamada K."/>
            <person name="Fujii Y."/>
            <person name="Ozaki K."/>
            <person name="Hirao M."/>
            <person name="Ohmori Y."/>
            <person name="Kawabata A."/>
            <person name="Hikiji T."/>
            <person name="Kobatake N."/>
            <person name="Inagaki H."/>
            <person name="Ikema Y."/>
            <person name="Okamoto S."/>
            <person name="Okitani R."/>
            <person name="Kawakami T."/>
            <person name="Noguchi S."/>
            <person name="Itoh T."/>
            <person name="Shigeta K."/>
            <person name="Senba T."/>
            <person name="Matsumura K."/>
            <person name="Nakajima Y."/>
            <person name="Mizuno T."/>
            <person name="Morinaga M."/>
            <person name="Sasaki M."/>
            <person name="Togashi T."/>
            <person name="Oyama M."/>
            <person name="Hata H."/>
            <person name="Watanabe M."/>
            <person name="Komatsu T."/>
            <person name="Mizushima-Sugano J."/>
            <person name="Satoh T."/>
            <person name="Shirai Y."/>
            <person name="Takahashi Y."/>
            <person name="Nakagawa K."/>
            <person name="Okumura K."/>
            <person name="Nagase T."/>
            <person name="Nomura N."/>
            <person name="Kikuchi H."/>
            <person name="Masuho Y."/>
            <person name="Yamashita R."/>
            <person name="Nakai K."/>
            <person name="Yada T."/>
            <person name="Nakamura Y."/>
            <person name="Ohara O."/>
            <person name="Isogai T."/>
            <person name="Sugano S."/>
        </authorList>
    </citation>
    <scope>NUCLEOTIDE SEQUENCE [LARGE SCALE MRNA] (ISOFORMS 1 AND 2)</scope>
    <source>
        <tissue>Brain</tissue>
        <tissue>Uterus</tissue>
    </source>
</reference>
<reference key="4">
    <citation type="journal article" date="2005" name="Nature">
        <title>Generation and annotation of the DNA sequences of human chromosomes 2 and 4.</title>
        <authorList>
            <person name="Hillier L.W."/>
            <person name="Graves T.A."/>
            <person name="Fulton R.S."/>
            <person name="Fulton L.A."/>
            <person name="Pepin K.H."/>
            <person name="Minx P."/>
            <person name="Wagner-McPherson C."/>
            <person name="Layman D."/>
            <person name="Wylie K."/>
            <person name="Sekhon M."/>
            <person name="Becker M.C."/>
            <person name="Fewell G.A."/>
            <person name="Delehaunty K.D."/>
            <person name="Miner T.L."/>
            <person name="Nash W.E."/>
            <person name="Kremitzki C."/>
            <person name="Oddy L."/>
            <person name="Du H."/>
            <person name="Sun H."/>
            <person name="Bradshaw-Cordum H."/>
            <person name="Ali J."/>
            <person name="Carter J."/>
            <person name="Cordes M."/>
            <person name="Harris A."/>
            <person name="Isak A."/>
            <person name="van Brunt A."/>
            <person name="Nguyen C."/>
            <person name="Du F."/>
            <person name="Courtney L."/>
            <person name="Kalicki J."/>
            <person name="Ozersky P."/>
            <person name="Abbott S."/>
            <person name="Armstrong J."/>
            <person name="Belter E.A."/>
            <person name="Caruso L."/>
            <person name="Cedroni M."/>
            <person name="Cotton M."/>
            <person name="Davidson T."/>
            <person name="Desai A."/>
            <person name="Elliott G."/>
            <person name="Erb T."/>
            <person name="Fronick C."/>
            <person name="Gaige T."/>
            <person name="Haakenson W."/>
            <person name="Haglund K."/>
            <person name="Holmes A."/>
            <person name="Harkins R."/>
            <person name="Kim K."/>
            <person name="Kruchowski S.S."/>
            <person name="Strong C.M."/>
            <person name="Grewal N."/>
            <person name="Goyea E."/>
            <person name="Hou S."/>
            <person name="Levy A."/>
            <person name="Martinka S."/>
            <person name="Mead K."/>
            <person name="McLellan M.D."/>
            <person name="Meyer R."/>
            <person name="Randall-Maher J."/>
            <person name="Tomlinson C."/>
            <person name="Dauphin-Kohlberg S."/>
            <person name="Kozlowicz-Reilly A."/>
            <person name="Shah N."/>
            <person name="Swearengen-Shahid S."/>
            <person name="Snider J."/>
            <person name="Strong J.T."/>
            <person name="Thompson J."/>
            <person name="Yoakum M."/>
            <person name="Leonard S."/>
            <person name="Pearman C."/>
            <person name="Trani L."/>
            <person name="Radionenko M."/>
            <person name="Waligorski J.E."/>
            <person name="Wang C."/>
            <person name="Rock S.M."/>
            <person name="Tin-Wollam A.-M."/>
            <person name="Maupin R."/>
            <person name="Latreille P."/>
            <person name="Wendl M.C."/>
            <person name="Yang S.-P."/>
            <person name="Pohl C."/>
            <person name="Wallis J.W."/>
            <person name="Spieth J."/>
            <person name="Bieri T.A."/>
            <person name="Berkowicz N."/>
            <person name="Nelson J.O."/>
            <person name="Osborne J."/>
            <person name="Ding L."/>
            <person name="Meyer R."/>
            <person name="Sabo A."/>
            <person name="Shotland Y."/>
            <person name="Sinha P."/>
            <person name="Wohldmann P.E."/>
            <person name="Cook L.L."/>
            <person name="Hickenbotham M.T."/>
            <person name="Eldred J."/>
            <person name="Williams D."/>
            <person name="Jones T.A."/>
            <person name="She X."/>
            <person name="Ciccarelli F.D."/>
            <person name="Izaurralde E."/>
            <person name="Taylor J."/>
            <person name="Schmutz J."/>
            <person name="Myers R.M."/>
            <person name="Cox D.R."/>
            <person name="Huang X."/>
            <person name="McPherson J.D."/>
            <person name="Mardis E.R."/>
            <person name="Clifton S.W."/>
            <person name="Warren W.C."/>
            <person name="Chinwalla A.T."/>
            <person name="Eddy S.R."/>
            <person name="Marra M.A."/>
            <person name="Ovcharenko I."/>
            <person name="Furey T.S."/>
            <person name="Miller W."/>
            <person name="Eichler E.E."/>
            <person name="Bork P."/>
            <person name="Suyama M."/>
            <person name="Torrents D."/>
            <person name="Waterston R.H."/>
            <person name="Wilson R.K."/>
        </authorList>
    </citation>
    <scope>NUCLEOTIDE SEQUENCE [LARGE SCALE GENOMIC DNA]</scope>
</reference>
<reference key="5">
    <citation type="submission" date="2005-07" db="EMBL/GenBank/DDBJ databases">
        <authorList>
            <person name="Mural R.J."/>
            <person name="Istrail S."/>
            <person name="Sutton G.G."/>
            <person name="Florea L."/>
            <person name="Halpern A.L."/>
            <person name="Mobarry C.M."/>
            <person name="Lippert R."/>
            <person name="Walenz B."/>
            <person name="Shatkay H."/>
            <person name="Dew I."/>
            <person name="Miller J.R."/>
            <person name="Flanigan M.J."/>
            <person name="Edwards N.J."/>
            <person name="Bolanos R."/>
            <person name="Fasulo D."/>
            <person name="Halldorsson B.V."/>
            <person name="Hannenhalli S."/>
            <person name="Turner R."/>
            <person name="Yooseph S."/>
            <person name="Lu F."/>
            <person name="Nusskern D.R."/>
            <person name="Shue B.C."/>
            <person name="Zheng X.H."/>
            <person name="Zhong F."/>
            <person name="Delcher A.L."/>
            <person name="Huson D.H."/>
            <person name="Kravitz S.A."/>
            <person name="Mouchard L."/>
            <person name="Reinert K."/>
            <person name="Remington K.A."/>
            <person name="Clark A.G."/>
            <person name="Waterman M.S."/>
            <person name="Eichler E.E."/>
            <person name="Adams M.D."/>
            <person name="Hunkapiller M.W."/>
            <person name="Myers E.W."/>
            <person name="Venter J.C."/>
        </authorList>
    </citation>
    <scope>NUCLEOTIDE SEQUENCE [LARGE SCALE GENOMIC DNA]</scope>
</reference>
<reference key="6">
    <citation type="journal article" date="2004" name="Genome Res.">
        <title>The status, quality, and expansion of the NIH full-length cDNA project: the Mammalian Gene Collection (MGC).</title>
        <authorList>
            <consortium name="The MGC Project Team"/>
        </authorList>
    </citation>
    <scope>NUCLEOTIDE SEQUENCE [LARGE SCALE MRNA] (ISOFORM 1)</scope>
    <source>
        <tissue>PNS</tissue>
    </source>
</reference>
<reference key="7">
    <citation type="journal article" date="2009" name="Mol. Biol. Cell">
        <title>The transforming growth factor-beta type III receptor mediates distinct subcellular trafficking and downstream signaling of activin-like kinase (ALK)3 and ALK6 receptors.</title>
        <authorList>
            <person name="Lee N.Y."/>
            <person name="Kirkbride K.C."/>
            <person name="Sheu R.D."/>
            <person name="Blobe G.C."/>
        </authorList>
    </citation>
    <scope>INTERACTION WITH TGFBR3</scope>
    <scope>SUBCELLULAR LOCATION</scope>
</reference>
<reference key="8">
    <citation type="journal article" date="2011" name="Mol. Cell. Biol.">
        <title>TSC-22 promotes transforming growth factor beta-mediated cardiac myofibroblast differentiation by antagonizing Smad7 activity.</title>
        <authorList>
            <person name="Yan X."/>
            <person name="Zhang J."/>
            <person name="Pan L."/>
            <person name="Wang P."/>
            <person name="Xue H."/>
            <person name="Zhang L."/>
            <person name="Gao X."/>
            <person name="Zhao X."/>
            <person name="Ning Y."/>
            <person name="Chen Y.G."/>
        </authorList>
    </citation>
    <scope>INTERACTION WITH TSC22D1</scope>
</reference>
<reference key="9">
    <citation type="journal article" date="2013" name="PLoS Genet.">
        <title>A GDF5 point mutation strikes twice--causing BDA1 and SYNS2.</title>
        <authorList>
            <person name="Degenkolbe E."/>
            <person name="Konig J."/>
            <person name="Zimmer J."/>
            <person name="Walther M."/>
            <person name="Reissner C."/>
            <person name="Nickel J."/>
            <person name="Ploger F."/>
            <person name="Raspopovic J."/>
            <person name="Sharpe J."/>
            <person name="Dathe K."/>
            <person name="Hecht J.T."/>
            <person name="Mundlos S."/>
            <person name="Doelken S.C."/>
            <person name="Seemann P."/>
        </authorList>
    </citation>
    <scope>INTERACTION WITH GDF5</scope>
</reference>
<reference key="10">
    <citation type="journal article" date="2021" name="Am. J. Hum. Genet.">
        <title>SCUBE3 loss-of-function causes a recognizable recessive developmental disorder due to defective bone morphogenetic protein signaling.</title>
        <authorList>
            <consortium name="Genomics England Research Consortium"/>
            <person name="Lin Y.C."/>
            <person name="Niceta M."/>
            <person name="Muto V."/>
            <person name="Vona B."/>
            <person name="Pagnamenta A.T."/>
            <person name="Maroofian R."/>
            <person name="Beetz C."/>
            <person name="van Duyvenvoorde H."/>
            <person name="Dentici M.L."/>
            <person name="Lauffer P."/>
            <person name="Vallian S."/>
            <person name="Ciolfi A."/>
            <person name="Pizzi S."/>
            <person name="Bauer P."/>
            <person name="Gruening N.M."/>
            <person name="Bellacchio E."/>
            <person name="Del Fattore A."/>
            <person name="Petrini S."/>
            <person name="Shaheen R."/>
            <person name="Tiosano D."/>
            <person name="Halloun R."/>
            <person name="Pode-Shakked B."/>
            <person name="Albayrak H.M."/>
            <person name="Isik E."/>
            <person name="Wit J.M."/>
            <person name="Dittrich M."/>
            <person name="Freire B.L."/>
            <person name="Bertola D.R."/>
            <person name="Jorge A.A.L."/>
            <person name="Barel O."/>
            <person name="Sabir A.H."/>
            <person name="Al Tenaiji A.M.J."/>
            <person name="Taji S.M."/>
            <person name="Al-Sannaa N."/>
            <person name="Al-Abdulwahed H."/>
            <person name="Digilio M.C."/>
            <person name="Irving M."/>
            <person name="Anikster Y."/>
            <person name="Bhavani G.S.L."/>
            <person name="Girisha K.M."/>
            <person name="Haaf T."/>
            <person name="Taylor J.C."/>
            <person name="Dallapiccola B."/>
            <person name="Alkuraya F.S."/>
            <person name="Yang R.B."/>
            <person name="Tartaglia M."/>
        </authorList>
    </citation>
    <scope>INTERACTION WITH SCUBE3</scope>
</reference>
<reference key="11">
    <citation type="journal article" date="2003" name="Proc. Natl. Acad. Sci. U.S.A.">
        <title>Mutations in bone morphogenetic protein receptor 1B cause brachydactyly type A2.</title>
        <authorList>
            <person name="Lehmann K."/>
            <person name="Seemann P."/>
            <person name="Stricker S."/>
            <person name="Sammar M."/>
            <person name="Meyer B."/>
            <person name="Suering K."/>
            <person name="Majewski F."/>
            <person name="Tinschert S."/>
            <person name="Grzeschik K.-H."/>
            <person name="Mueller D."/>
            <person name="Knaus P."/>
            <person name="Nuernberg P."/>
            <person name="Mundlos S."/>
        </authorList>
    </citation>
    <scope>VARIANTS BDA2 LYS-200 AND TRP-486</scope>
    <scope>CHARACTERIZATION OF VARIANTS BDA2 LYS-200 AND TRP-486</scope>
</reference>
<reference key="12">
    <citation type="journal article" date="2005" name="J. Med. Genet.">
        <title>A homozygous BMPR1B mutation causes a new subtype of acromesomelic chondrodysplasia with genital anomalies.</title>
        <authorList>
            <person name="Demirhan O."/>
            <person name="Tuerkmen S."/>
            <person name="Schwabe G.C."/>
            <person name="Soyupak S."/>
            <person name="Akguel E."/>
            <person name="Tastemir D."/>
            <person name="Karahan D."/>
            <person name="Mundlos S."/>
            <person name="Lehmann K."/>
        </authorList>
    </citation>
    <scope>INVOLVEMENT IN AMD3</scope>
</reference>
<reference key="13">
    <citation type="journal article" date="2006" name="Eur. J. Hum. Genet.">
        <title>A novel R486Q mutation in BMPR1B resulting in either a brachydactyly type C/symphalangism-like phenotype or brachydactyly type A2.</title>
        <authorList>
            <person name="Lehmann K."/>
            <person name="Seemann P."/>
            <person name="Boergermann J."/>
            <person name="Morin G."/>
            <person name="Reif S."/>
            <person name="Knaus P."/>
            <person name="Mundlos S."/>
        </authorList>
    </citation>
    <scope>VARIANT BRACHYDACTYLY TYPE C/BDA2 GLN-486</scope>
</reference>
<reference key="14">
    <citation type="journal article" date="2007" name="Nature">
        <title>Patterns of somatic mutation in human cancer genomes.</title>
        <authorList>
            <person name="Greenman C."/>
            <person name="Stephens P."/>
            <person name="Smith R."/>
            <person name="Dalgliesh G.L."/>
            <person name="Hunter C."/>
            <person name="Bignell G."/>
            <person name="Davies H."/>
            <person name="Teague J."/>
            <person name="Butler A."/>
            <person name="Stevens C."/>
            <person name="Edkins S."/>
            <person name="O'Meara S."/>
            <person name="Vastrik I."/>
            <person name="Schmidt E.E."/>
            <person name="Avis T."/>
            <person name="Barthorpe S."/>
            <person name="Bhamra G."/>
            <person name="Buck G."/>
            <person name="Choudhury B."/>
            <person name="Clements J."/>
            <person name="Cole J."/>
            <person name="Dicks E."/>
            <person name="Forbes S."/>
            <person name="Gray K."/>
            <person name="Halliday K."/>
            <person name="Harrison R."/>
            <person name="Hills K."/>
            <person name="Hinton J."/>
            <person name="Jenkinson A."/>
            <person name="Jones D."/>
            <person name="Menzies A."/>
            <person name="Mironenko T."/>
            <person name="Perry J."/>
            <person name="Raine K."/>
            <person name="Richardson D."/>
            <person name="Shepherd R."/>
            <person name="Small A."/>
            <person name="Tofts C."/>
            <person name="Varian J."/>
            <person name="Webb T."/>
            <person name="West S."/>
            <person name="Widaa S."/>
            <person name="Yates A."/>
            <person name="Cahill D.P."/>
            <person name="Louis D.N."/>
            <person name="Goldstraw P."/>
            <person name="Nicholson A.G."/>
            <person name="Brasseur F."/>
            <person name="Looijenga L."/>
            <person name="Weber B.L."/>
            <person name="Chiew Y.-E."/>
            <person name="DeFazio A."/>
            <person name="Greaves M.F."/>
            <person name="Green A.R."/>
            <person name="Campbell P."/>
            <person name="Birney E."/>
            <person name="Easton D.F."/>
            <person name="Chenevix-Trench G."/>
            <person name="Tan M.-H."/>
            <person name="Khoo S.K."/>
            <person name="Teh B.T."/>
            <person name="Yuen S.T."/>
            <person name="Leung S.Y."/>
            <person name="Wooster R."/>
            <person name="Futreal P.A."/>
            <person name="Stratton M.R."/>
        </authorList>
    </citation>
    <scope>VARIANTS [LARGE SCALE ANALYSIS] HIS-31; TRP-149; HIS-224; ASN-297 AND GLN-371</scope>
</reference>
<reference key="15">
    <citation type="journal article" date="2014" name="Eur. J. Hum. Genet.">
        <title>Homozygous missense and nonsense mutations in BMPR1B cause acromesomelic chondrodysplasia-type Grebe.</title>
        <authorList>
            <person name="Graul-Neumann L.M."/>
            <person name="Deichsel A."/>
            <person name="Wille U."/>
            <person name="Kakar N."/>
            <person name="Koll R."/>
            <person name="Bassir C."/>
            <person name="Ahmad J."/>
            <person name="Cormier-Daire V."/>
            <person name="Mundlos S."/>
            <person name="Kubisch C."/>
            <person name="Borck G."/>
            <person name="Klopocki E."/>
            <person name="Mueller T.D."/>
            <person name="Doelken S.C."/>
            <person name="Seemann P."/>
        </authorList>
    </citation>
    <scope>VARIANT AMD3 ARG-53</scope>
    <scope>CHARACTERIZATION OF VARIANT AMD3 ARG-53</scope>
</reference>
<reference key="16">
    <citation type="journal article" date="2015" name="Eur. J. Hum. Genet.">
        <title>Two novel disease-causing variants in BMPR1B are associated with brachydactyly type A1.</title>
        <authorList>
            <person name="Racacho L."/>
            <person name="Byrnes A.M."/>
            <person name="MacDonald H."/>
            <person name="Dranse H.J."/>
            <person name="Nikkel S.M."/>
            <person name="Allanson J."/>
            <person name="Rosser E."/>
            <person name="Underhill T.M."/>
            <person name="Bulman D.E."/>
        </authorList>
    </citation>
    <scope>INVOLVEMENT IN BDA1D</scope>
    <scope>VARIANT BDA1D ASN-325</scope>
    <scope>CHARACTERIZATION OF VARIANT BDA1D ASN-325</scope>
</reference>
<reference key="17">
    <citation type="journal article" date="2015" name="Orphanet J. Rare Dis.">
        <title>A hypomorphic BMPR1B mutation causes du Pan acromesomelic dysplasia.</title>
        <authorList>
            <person name="Stange K."/>
            <person name="Desir J."/>
            <person name="Kakar N."/>
            <person name="Mueller T.D."/>
            <person name="Budde B.S."/>
            <person name="Gordon C.T."/>
            <person name="Horn D."/>
            <person name="Seemann P."/>
            <person name="Borck G."/>
        </authorList>
    </citation>
    <scope>VARIANT AMD3 CYS-31</scope>
    <scope>CHARACTERIZATION OF VARIANT AMD3 CYS-31</scope>
</reference>
<dbReference type="EC" id="2.7.11.30" evidence="2"/>
<dbReference type="EMBL" id="D89675">
    <property type="protein sequence ID" value="BAA19765.1"/>
    <property type="molecule type" value="mRNA"/>
</dbReference>
<dbReference type="EMBL" id="U89326">
    <property type="protein sequence ID" value="AAC28131.1"/>
    <property type="molecule type" value="mRNA"/>
</dbReference>
<dbReference type="EMBL" id="AK299930">
    <property type="protein sequence ID" value="BAG61763.1"/>
    <property type="molecule type" value="mRNA"/>
</dbReference>
<dbReference type="EMBL" id="AK313642">
    <property type="protein sequence ID" value="BAG36400.1"/>
    <property type="molecule type" value="mRNA"/>
</dbReference>
<dbReference type="EMBL" id="AC004061">
    <property type="status" value="NOT_ANNOTATED_CDS"/>
    <property type="molecule type" value="Genomic_DNA"/>
</dbReference>
<dbReference type="EMBL" id="AC092609">
    <property type="status" value="NOT_ANNOTATED_CDS"/>
    <property type="molecule type" value="Genomic_DNA"/>
</dbReference>
<dbReference type="EMBL" id="AC093634">
    <property type="status" value="NOT_ANNOTATED_CDS"/>
    <property type="molecule type" value="Genomic_DNA"/>
</dbReference>
<dbReference type="EMBL" id="AC105395">
    <property type="status" value="NOT_ANNOTATED_CDS"/>
    <property type="molecule type" value="Genomic_DNA"/>
</dbReference>
<dbReference type="EMBL" id="CH471057">
    <property type="protein sequence ID" value="EAX06060.1"/>
    <property type="molecule type" value="Genomic_DNA"/>
</dbReference>
<dbReference type="EMBL" id="BC047773">
    <property type="protein sequence ID" value="AAH47773.1"/>
    <property type="molecule type" value="mRNA"/>
</dbReference>
<dbReference type="EMBL" id="BC069796">
    <property type="protein sequence ID" value="AAH69796.1"/>
    <property type="molecule type" value="mRNA"/>
</dbReference>
<dbReference type="EMBL" id="BC069803">
    <property type="protein sequence ID" value="AAH69803.1"/>
    <property type="molecule type" value="mRNA"/>
</dbReference>
<dbReference type="CCDS" id="CCDS3642.1">
    <molecule id="O00238-1"/>
</dbReference>
<dbReference type="CCDS" id="CCDS58919.1">
    <molecule id="O00238-2"/>
</dbReference>
<dbReference type="RefSeq" id="NP_001194.1">
    <molecule id="O00238-1"/>
    <property type="nucleotide sequence ID" value="NM_001203.3"/>
</dbReference>
<dbReference type="RefSeq" id="NP_001243721.1">
    <molecule id="O00238-1"/>
    <property type="nucleotide sequence ID" value="NM_001256792.2"/>
</dbReference>
<dbReference type="RefSeq" id="NP_001243722.1">
    <molecule id="O00238-2"/>
    <property type="nucleotide sequence ID" value="NM_001256793.2"/>
</dbReference>
<dbReference type="RefSeq" id="NP_001243723.1">
    <molecule id="O00238-1"/>
    <property type="nucleotide sequence ID" value="NM_001256794.1"/>
</dbReference>
<dbReference type="RefSeq" id="XP_011530503.1">
    <molecule id="O00238-1"/>
    <property type="nucleotide sequence ID" value="XM_011532201.3"/>
</dbReference>
<dbReference type="RefSeq" id="XP_016864047.1">
    <molecule id="O00238-1"/>
    <property type="nucleotide sequence ID" value="XM_017008558.2"/>
</dbReference>
<dbReference type="RefSeq" id="XP_016864048.1">
    <molecule id="O00238-1"/>
    <property type="nucleotide sequence ID" value="XM_017008559.2"/>
</dbReference>
<dbReference type="RefSeq" id="XP_016864049.1">
    <molecule id="O00238-1"/>
    <property type="nucleotide sequence ID" value="XM_017008560.2"/>
</dbReference>
<dbReference type="RefSeq" id="XP_016864050.1">
    <property type="nucleotide sequence ID" value="XM_017008561.1"/>
</dbReference>
<dbReference type="RefSeq" id="XP_047272047.1">
    <molecule id="O00238-1"/>
    <property type="nucleotide sequence ID" value="XM_047416091.1"/>
</dbReference>
<dbReference type="RefSeq" id="XP_047272049.1">
    <molecule id="O00238-1"/>
    <property type="nucleotide sequence ID" value="XM_047416093.1"/>
</dbReference>
<dbReference type="RefSeq" id="XP_047272050.1">
    <molecule id="O00238-1"/>
    <property type="nucleotide sequence ID" value="XM_047416094.1"/>
</dbReference>
<dbReference type="RefSeq" id="XP_047272051.1">
    <molecule id="O00238-1"/>
    <property type="nucleotide sequence ID" value="XM_047416095.1"/>
</dbReference>
<dbReference type="RefSeq" id="XP_054206712.1">
    <molecule id="O00238-1"/>
    <property type="nucleotide sequence ID" value="XM_054350737.1"/>
</dbReference>
<dbReference type="RefSeq" id="XP_054206713.1">
    <molecule id="O00238-1"/>
    <property type="nucleotide sequence ID" value="XM_054350738.1"/>
</dbReference>
<dbReference type="RefSeq" id="XP_054206714.1">
    <molecule id="O00238-1"/>
    <property type="nucleotide sequence ID" value="XM_054350739.1"/>
</dbReference>
<dbReference type="RefSeq" id="XP_054206715.1">
    <molecule id="O00238-1"/>
    <property type="nucleotide sequence ID" value="XM_054350740.1"/>
</dbReference>
<dbReference type="RefSeq" id="XP_054206716.1">
    <molecule id="O00238-1"/>
    <property type="nucleotide sequence ID" value="XM_054350741.1"/>
</dbReference>
<dbReference type="RefSeq" id="XP_054206717.1">
    <molecule id="O00238-1"/>
    <property type="nucleotide sequence ID" value="XM_054350742.1"/>
</dbReference>
<dbReference type="RefSeq" id="XP_054206718.1">
    <molecule id="O00238-1"/>
    <property type="nucleotide sequence ID" value="XM_054350743.1"/>
</dbReference>
<dbReference type="PDB" id="3MDY">
    <property type="method" value="X-ray"/>
    <property type="resolution" value="2.05 A"/>
    <property type="chains" value="A/C=168-502"/>
</dbReference>
<dbReference type="PDBsum" id="3MDY"/>
<dbReference type="SMR" id="O00238"/>
<dbReference type="BioGRID" id="107126">
    <property type="interactions" value="80"/>
</dbReference>
<dbReference type="FunCoup" id="O00238">
    <property type="interactions" value="929"/>
</dbReference>
<dbReference type="IntAct" id="O00238">
    <property type="interactions" value="7"/>
</dbReference>
<dbReference type="MINT" id="O00238"/>
<dbReference type="STRING" id="9606.ENSP00000401907"/>
<dbReference type="BindingDB" id="O00238"/>
<dbReference type="ChEMBL" id="CHEMBL5476"/>
<dbReference type="DrugBank" id="DB12010">
    <property type="generic name" value="Fostamatinib"/>
</dbReference>
<dbReference type="DrugCentral" id="O00238"/>
<dbReference type="GuidetoPHARMACOLOGY" id="1789"/>
<dbReference type="GlyGen" id="O00238">
    <property type="glycosylation" value="2 sites, 1 N-linked glycan (1 site), 1 O-linked glycan (1 site)"/>
</dbReference>
<dbReference type="iPTMnet" id="O00238"/>
<dbReference type="PhosphoSitePlus" id="O00238"/>
<dbReference type="BioMuta" id="BMPR1B"/>
<dbReference type="CPTAC" id="CPTAC-2846"/>
<dbReference type="CPTAC" id="CPTAC-2847"/>
<dbReference type="jPOST" id="O00238"/>
<dbReference type="MassIVE" id="O00238"/>
<dbReference type="PaxDb" id="9606-ENSP00000401907"/>
<dbReference type="PeptideAtlas" id="O00238"/>
<dbReference type="ProteomicsDB" id="47802">
    <molecule id="O00238-1"/>
</dbReference>
<dbReference type="Antibodypedia" id="4045">
    <property type="antibodies" value="661 antibodies from 36 providers"/>
</dbReference>
<dbReference type="DNASU" id="658"/>
<dbReference type="Ensembl" id="ENST00000264568.8">
    <molecule id="O00238-1"/>
    <property type="protein sequence ID" value="ENSP00000264568.4"/>
    <property type="gene ID" value="ENSG00000138696.11"/>
</dbReference>
<dbReference type="Ensembl" id="ENST00000394931.1">
    <molecule id="O00238-1"/>
    <property type="protein sequence ID" value="ENSP00000378389.1"/>
    <property type="gene ID" value="ENSG00000138696.11"/>
</dbReference>
<dbReference type="Ensembl" id="ENST00000440890.7">
    <molecule id="O00238-2"/>
    <property type="protein sequence ID" value="ENSP00000401907.2"/>
    <property type="gene ID" value="ENSG00000138696.11"/>
</dbReference>
<dbReference type="Ensembl" id="ENST00000509540.6">
    <molecule id="O00238-1"/>
    <property type="protein sequence ID" value="ENSP00000421671.1"/>
    <property type="gene ID" value="ENSG00000138696.11"/>
</dbReference>
<dbReference type="Ensembl" id="ENST00000512312.5">
    <molecule id="O00238-1"/>
    <property type="protein sequence ID" value="ENSP00000425444.1"/>
    <property type="gene ID" value="ENSG00000138696.11"/>
</dbReference>
<dbReference type="Ensembl" id="ENST00000515059.6">
    <molecule id="O00238-1"/>
    <property type="protein sequence ID" value="ENSP00000426617.1"/>
    <property type="gene ID" value="ENSG00000138696.11"/>
</dbReference>
<dbReference type="Ensembl" id="ENST00000672698.1">
    <molecule id="O00238-1"/>
    <property type="protein sequence ID" value="ENSP00000500035.1"/>
    <property type="gene ID" value="ENSG00000138696.11"/>
</dbReference>
<dbReference type="GeneID" id="658"/>
<dbReference type="KEGG" id="hsa:658"/>
<dbReference type="MANE-Select" id="ENST00000515059.6">
    <property type="protein sequence ID" value="ENSP00000426617.1"/>
    <property type="RefSeq nucleotide sequence ID" value="NM_001203.3"/>
    <property type="RefSeq protein sequence ID" value="NP_001194.1"/>
</dbReference>
<dbReference type="UCSC" id="uc003htm.5">
    <molecule id="O00238-1"/>
    <property type="organism name" value="human"/>
</dbReference>
<dbReference type="AGR" id="HGNC:1077"/>
<dbReference type="CTD" id="658"/>
<dbReference type="DisGeNET" id="658"/>
<dbReference type="GeneCards" id="BMPR1B"/>
<dbReference type="GeneReviews" id="BMPR1B"/>
<dbReference type="HGNC" id="HGNC:1077">
    <property type="gene designation" value="BMPR1B"/>
</dbReference>
<dbReference type="HPA" id="ENSG00000138696">
    <property type="expression patterns" value="Tissue enhanced (cervix, prostate)"/>
</dbReference>
<dbReference type="MalaCards" id="BMPR1B"/>
<dbReference type="MIM" id="112600">
    <property type="type" value="phenotype"/>
</dbReference>
<dbReference type="MIM" id="603248">
    <property type="type" value="gene"/>
</dbReference>
<dbReference type="MIM" id="609441">
    <property type="type" value="phenotype"/>
</dbReference>
<dbReference type="MIM" id="616849">
    <property type="type" value="phenotype"/>
</dbReference>
<dbReference type="neXtProt" id="NX_O00238"/>
<dbReference type="OpenTargets" id="ENSG00000138696"/>
<dbReference type="Orphanet" id="2098">
    <property type="disease" value="Acromesomelic dysplasia, Grebe type"/>
</dbReference>
<dbReference type="Orphanet" id="93388">
    <property type="disease" value="Brachydactyly type A1"/>
</dbReference>
<dbReference type="Orphanet" id="93396">
    <property type="disease" value="Brachydactyly type A2"/>
</dbReference>
<dbReference type="Orphanet" id="93384">
    <property type="disease" value="Brachydactyly type C"/>
</dbReference>
<dbReference type="Orphanet" id="2639">
    <property type="disease" value="Fibular aplasia-complex brachydactyly syndrome"/>
</dbReference>
<dbReference type="PharmGKB" id="PA25387"/>
<dbReference type="VEuPathDB" id="HostDB:ENSG00000138696"/>
<dbReference type="eggNOG" id="KOG2052">
    <property type="taxonomic scope" value="Eukaryota"/>
</dbReference>
<dbReference type="GeneTree" id="ENSGT00940000155919"/>
<dbReference type="HOGENOM" id="CLU_000288_8_1_1"/>
<dbReference type="InParanoid" id="O00238"/>
<dbReference type="OMA" id="RRTIACC"/>
<dbReference type="OrthoDB" id="69842at2759"/>
<dbReference type="PAN-GO" id="O00238">
    <property type="GO annotations" value="8 GO annotations based on evolutionary models"/>
</dbReference>
<dbReference type="PhylomeDB" id="O00238"/>
<dbReference type="TreeFam" id="TF314724"/>
<dbReference type="BRENDA" id="2.7.10.2">
    <property type="organism ID" value="2681"/>
</dbReference>
<dbReference type="PathwayCommons" id="O00238"/>
<dbReference type="Reactome" id="R-HSA-201451">
    <property type="pathway name" value="Signaling by BMP"/>
</dbReference>
<dbReference type="SignaLink" id="O00238"/>
<dbReference type="SIGNOR" id="O00238"/>
<dbReference type="BioGRID-ORCS" id="658">
    <property type="hits" value="17 hits in 1178 CRISPR screens"/>
</dbReference>
<dbReference type="ChiTaRS" id="BMPR1B">
    <property type="organism name" value="human"/>
</dbReference>
<dbReference type="EvolutionaryTrace" id="O00238"/>
<dbReference type="GeneWiki" id="BMPR1B"/>
<dbReference type="GenomeRNAi" id="658"/>
<dbReference type="Pharos" id="O00238">
    <property type="development level" value="Tchem"/>
</dbReference>
<dbReference type="PRO" id="PR:O00238"/>
<dbReference type="Proteomes" id="UP000005640">
    <property type="component" value="Chromosome 4"/>
</dbReference>
<dbReference type="RNAct" id="O00238">
    <property type="molecule type" value="protein"/>
</dbReference>
<dbReference type="Bgee" id="ENSG00000138696">
    <property type="expression patterns" value="Expressed in calcaneal tendon and 160 other cell types or tissues"/>
</dbReference>
<dbReference type="ExpressionAtlas" id="O00238">
    <property type="expression patterns" value="baseline and differential"/>
</dbReference>
<dbReference type="GO" id="GO:0030425">
    <property type="term" value="C:dendrite"/>
    <property type="evidence" value="ECO:0007669"/>
    <property type="project" value="Ensembl"/>
</dbReference>
<dbReference type="GO" id="GO:1990712">
    <property type="term" value="C:HFE-transferrin receptor complex"/>
    <property type="evidence" value="ECO:0000305"/>
    <property type="project" value="BHF-UCL"/>
</dbReference>
<dbReference type="GO" id="GO:0043025">
    <property type="term" value="C:neuronal cell body"/>
    <property type="evidence" value="ECO:0007669"/>
    <property type="project" value="Ensembl"/>
</dbReference>
<dbReference type="GO" id="GO:0005886">
    <property type="term" value="C:plasma membrane"/>
    <property type="evidence" value="ECO:0000250"/>
    <property type="project" value="UniProtKB"/>
</dbReference>
<dbReference type="GO" id="GO:0043235">
    <property type="term" value="C:receptor complex"/>
    <property type="evidence" value="ECO:0000318"/>
    <property type="project" value="GO_Central"/>
</dbReference>
<dbReference type="GO" id="GO:0005524">
    <property type="term" value="F:ATP binding"/>
    <property type="evidence" value="ECO:0000314"/>
    <property type="project" value="HGNC-UCL"/>
</dbReference>
<dbReference type="GO" id="GO:0036122">
    <property type="term" value="F:BMP binding"/>
    <property type="evidence" value="ECO:0000353"/>
    <property type="project" value="BHF-UCL"/>
</dbReference>
<dbReference type="GO" id="GO:0098821">
    <property type="term" value="F:BMP receptor activity"/>
    <property type="evidence" value="ECO:0000314"/>
    <property type="project" value="ARUK-UCL"/>
</dbReference>
<dbReference type="GO" id="GO:0046872">
    <property type="term" value="F:metal ion binding"/>
    <property type="evidence" value="ECO:0007669"/>
    <property type="project" value="UniProtKB-KW"/>
</dbReference>
<dbReference type="GO" id="GO:0004674">
    <property type="term" value="F:protein serine/threonine kinase activity"/>
    <property type="evidence" value="ECO:0000314"/>
    <property type="project" value="HGNC-UCL"/>
</dbReference>
<dbReference type="GO" id="GO:0046332">
    <property type="term" value="F:SMAD binding"/>
    <property type="evidence" value="ECO:0000314"/>
    <property type="project" value="HGNC-UCL"/>
</dbReference>
<dbReference type="GO" id="GO:0005025">
    <property type="term" value="F:transforming growth factor beta receptor activity, type I"/>
    <property type="evidence" value="ECO:0000318"/>
    <property type="project" value="GO_Central"/>
</dbReference>
<dbReference type="GO" id="GO:0004675">
    <property type="term" value="F:transmembrane receptor protein serine/threonine kinase activity"/>
    <property type="evidence" value="ECO:0000303"/>
    <property type="project" value="UniProtKB"/>
</dbReference>
<dbReference type="GO" id="GO:0004888">
    <property type="term" value="F:transmembrane signaling receptor activity"/>
    <property type="evidence" value="ECO:0000314"/>
    <property type="project" value="BHF-UCL"/>
</dbReference>
<dbReference type="GO" id="GO:0030509">
    <property type="term" value="P:BMP signaling pathway"/>
    <property type="evidence" value="ECO:0000314"/>
    <property type="project" value="HGNC-UCL"/>
</dbReference>
<dbReference type="GO" id="GO:0001502">
    <property type="term" value="P:cartilage condensation"/>
    <property type="evidence" value="ECO:0007669"/>
    <property type="project" value="Ensembl"/>
</dbReference>
<dbReference type="GO" id="GO:0030154">
    <property type="term" value="P:cell differentiation"/>
    <property type="evidence" value="ECO:0000318"/>
    <property type="project" value="GO_Central"/>
</dbReference>
<dbReference type="GO" id="GO:0071773">
    <property type="term" value="P:cellular response to BMP stimulus"/>
    <property type="evidence" value="ECO:0000315"/>
    <property type="project" value="BHF-UCL"/>
</dbReference>
<dbReference type="GO" id="GO:0071363">
    <property type="term" value="P:cellular response to growth factor stimulus"/>
    <property type="evidence" value="ECO:0000318"/>
    <property type="project" value="GO_Central"/>
</dbReference>
<dbReference type="GO" id="GO:0021953">
    <property type="term" value="P:central nervous system neuron differentiation"/>
    <property type="evidence" value="ECO:0007669"/>
    <property type="project" value="Ensembl"/>
</dbReference>
<dbReference type="GO" id="GO:0002063">
    <property type="term" value="P:chondrocyte development"/>
    <property type="evidence" value="ECO:0000250"/>
    <property type="project" value="AgBase"/>
</dbReference>
<dbReference type="GO" id="GO:0009953">
    <property type="term" value="P:dorsal/ventral pattern formation"/>
    <property type="evidence" value="ECO:0000318"/>
    <property type="project" value="GO_Central"/>
</dbReference>
<dbReference type="GO" id="GO:0060350">
    <property type="term" value="P:endochondral bone morphogenesis"/>
    <property type="evidence" value="ECO:0000250"/>
    <property type="project" value="AgBase"/>
</dbReference>
<dbReference type="GO" id="GO:0001654">
    <property type="term" value="P:eye development"/>
    <property type="evidence" value="ECO:0000250"/>
    <property type="project" value="UniProtKB"/>
</dbReference>
<dbReference type="GO" id="GO:0006954">
    <property type="term" value="P:inflammatory response"/>
    <property type="evidence" value="ECO:0007669"/>
    <property type="project" value="Ensembl"/>
</dbReference>
<dbReference type="GO" id="GO:1902731">
    <property type="term" value="P:negative regulation of chondrocyte proliferation"/>
    <property type="evidence" value="ECO:0000250"/>
    <property type="project" value="AgBase"/>
</dbReference>
<dbReference type="GO" id="GO:0001649">
    <property type="term" value="P:osteoblast differentiation"/>
    <property type="evidence" value="ECO:0000315"/>
    <property type="project" value="BHF-UCL"/>
</dbReference>
<dbReference type="GO" id="GO:0001550">
    <property type="term" value="P:ovarian cumulus expansion"/>
    <property type="evidence" value="ECO:0000250"/>
    <property type="project" value="UniProtKB"/>
</dbReference>
<dbReference type="GO" id="GO:0042698">
    <property type="term" value="P:ovulation cycle"/>
    <property type="evidence" value="ECO:0000250"/>
    <property type="project" value="UniProtKB"/>
</dbReference>
<dbReference type="GO" id="GO:0030501">
    <property type="term" value="P:positive regulation of bone mineralization"/>
    <property type="evidence" value="ECO:0000315"/>
    <property type="project" value="BHF-UCL"/>
</dbReference>
<dbReference type="GO" id="GO:0061036">
    <property type="term" value="P:positive regulation of cartilage development"/>
    <property type="evidence" value="ECO:0000250"/>
    <property type="project" value="AgBase"/>
</dbReference>
<dbReference type="GO" id="GO:0032332">
    <property type="term" value="P:positive regulation of chondrocyte differentiation"/>
    <property type="evidence" value="ECO:0000250"/>
    <property type="project" value="UniProtKB"/>
</dbReference>
<dbReference type="GO" id="GO:1902043">
    <property type="term" value="P:positive regulation of extrinsic apoptotic signaling pathway via death domain receptors"/>
    <property type="evidence" value="ECO:0007669"/>
    <property type="project" value="Ensembl"/>
</dbReference>
<dbReference type="GO" id="GO:0010628">
    <property type="term" value="P:positive regulation of gene expression"/>
    <property type="evidence" value="ECO:0000315"/>
    <property type="project" value="BHF-UCL"/>
</dbReference>
<dbReference type="GO" id="GO:0045669">
    <property type="term" value="P:positive regulation of osteoblast differentiation"/>
    <property type="evidence" value="ECO:0000315"/>
    <property type="project" value="BHF-UCL"/>
</dbReference>
<dbReference type="GO" id="GO:0045944">
    <property type="term" value="P:positive regulation of transcription by RNA polymerase II"/>
    <property type="evidence" value="ECO:0000315"/>
    <property type="project" value="BHF-UCL"/>
</dbReference>
<dbReference type="GO" id="GO:0030166">
    <property type="term" value="P:proteoglycan biosynthetic process"/>
    <property type="evidence" value="ECO:0000250"/>
    <property type="project" value="AgBase"/>
</dbReference>
<dbReference type="GO" id="GO:0060041">
    <property type="term" value="P:retina development in camera-type eye"/>
    <property type="evidence" value="ECO:0007669"/>
    <property type="project" value="Ensembl"/>
</dbReference>
<dbReference type="GO" id="GO:0031290">
    <property type="term" value="P:retinal ganglion cell axon guidance"/>
    <property type="evidence" value="ECO:0007669"/>
    <property type="project" value="Ensembl"/>
</dbReference>
<dbReference type="CDD" id="cd14219">
    <property type="entry name" value="STKc_BMPR1b"/>
    <property type="match status" value="1"/>
</dbReference>
<dbReference type="CDD" id="cd23613">
    <property type="entry name" value="TFP_LU_ECD_BMPR1B"/>
    <property type="match status" value="1"/>
</dbReference>
<dbReference type="FunFam" id="1.10.510.10:FF:000018">
    <property type="entry name" value="Receptor protein serine/threonine kinase"/>
    <property type="match status" value="1"/>
</dbReference>
<dbReference type="FunFam" id="2.10.60.10:FF:000001">
    <property type="entry name" value="Receptor protein serine/threonine kinase"/>
    <property type="match status" value="1"/>
</dbReference>
<dbReference type="FunFam" id="3.30.200.20:FF:000055">
    <property type="entry name" value="Receptor protein serine/threonine kinase"/>
    <property type="match status" value="1"/>
</dbReference>
<dbReference type="Gene3D" id="2.10.60.10">
    <property type="entry name" value="CD59"/>
    <property type="match status" value="1"/>
</dbReference>
<dbReference type="Gene3D" id="3.30.200.20">
    <property type="entry name" value="Phosphorylase Kinase, domain 1"/>
    <property type="match status" value="1"/>
</dbReference>
<dbReference type="Gene3D" id="1.10.510.10">
    <property type="entry name" value="Transferase(Phosphotransferase) domain 1"/>
    <property type="match status" value="1"/>
</dbReference>
<dbReference type="InterPro" id="IPR000472">
    <property type="entry name" value="Activin_recp"/>
</dbReference>
<dbReference type="InterPro" id="IPR003605">
    <property type="entry name" value="GS_dom"/>
</dbReference>
<dbReference type="InterPro" id="IPR011009">
    <property type="entry name" value="Kinase-like_dom_sf"/>
</dbReference>
<dbReference type="InterPro" id="IPR000719">
    <property type="entry name" value="Prot_kinase_dom"/>
</dbReference>
<dbReference type="InterPro" id="IPR017441">
    <property type="entry name" value="Protein_kinase_ATP_BS"/>
</dbReference>
<dbReference type="InterPro" id="IPR001245">
    <property type="entry name" value="Ser-Thr/Tyr_kinase_cat_dom"/>
</dbReference>
<dbReference type="InterPro" id="IPR008271">
    <property type="entry name" value="Ser/Thr_kinase_AS"/>
</dbReference>
<dbReference type="InterPro" id="IPR045860">
    <property type="entry name" value="Snake_toxin-like_sf"/>
</dbReference>
<dbReference type="InterPro" id="IPR000333">
    <property type="entry name" value="TGFB_receptor"/>
</dbReference>
<dbReference type="PANTHER" id="PTHR23255:SF62">
    <property type="entry name" value="BONE MORPHOGENETIC PROTEIN RECEPTOR TYPE-1B"/>
    <property type="match status" value="1"/>
</dbReference>
<dbReference type="PANTHER" id="PTHR23255">
    <property type="entry name" value="TRANSFORMING GROWTH FACTOR-BETA RECEPTOR TYPE I AND II"/>
    <property type="match status" value="1"/>
</dbReference>
<dbReference type="Pfam" id="PF01064">
    <property type="entry name" value="Activin_recp"/>
    <property type="match status" value="1"/>
</dbReference>
<dbReference type="Pfam" id="PF07714">
    <property type="entry name" value="PK_Tyr_Ser-Thr"/>
    <property type="match status" value="1"/>
</dbReference>
<dbReference type="Pfam" id="PF08515">
    <property type="entry name" value="TGF_beta_GS"/>
    <property type="match status" value="1"/>
</dbReference>
<dbReference type="PRINTS" id="PR00653">
    <property type="entry name" value="ACTIVIN2R"/>
</dbReference>
<dbReference type="SMART" id="SM00467">
    <property type="entry name" value="GS"/>
    <property type="match status" value="1"/>
</dbReference>
<dbReference type="SMART" id="SM00220">
    <property type="entry name" value="S_TKc"/>
    <property type="match status" value="1"/>
</dbReference>
<dbReference type="SUPFAM" id="SSF56112">
    <property type="entry name" value="Protein kinase-like (PK-like)"/>
    <property type="match status" value="1"/>
</dbReference>
<dbReference type="SUPFAM" id="SSF57302">
    <property type="entry name" value="Snake toxin-like"/>
    <property type="match status" value="1"/>
</dbReference>
<dbReference type="PROSITE" id="PS51256">
    <property type="entry name" value="GS"/>
    <property type="match status" value="1"/>
</dbReference>
<dbReference type="PROSITE" id="PS00107">
    <property type="entry name" value="PROTEIN_KINASE_ATP"/>
    <property type="match status" value="1"/>
</dbReference>
<dbReference type="PROSITE" id="PS50011">
    <property type="entry name" value="PROTEIN_KINASE_DOM"/>
    <property type="match status" value="1"/>
</dbReference>
<dbReference type="PROSITE" id="PS00108">
    <property type="entry name" value="PROTEIN_KINASE_ST"/>
    <property type="match status" value="1"/>
</dbReference>
<proteinExistence type="evidence at protein level"/>
<feature type="signal peptide" evidence="3">
    <location>
        <begin position="1"/>
        <end position="13"/>
    </location>
</feature>
<feature type="chain" id="PRO_0000024412" description="Bone morphogenetic protein receptor type-1B">
    <location>
        <begin position="14"/>
        <end position="502"/>
    </location>
</feature>
<feature type="topological domain" description="Extracellular" evidence="3">
    <location>
        <begin position="14"/>
        <end position="126"/>
    </location>
</feature>
<feature type="transmembrane region" description="Helical" evidence="3">
    <location>
        <begin position="127"/>
        <end position="148"/>
    </location>
</feature>
<feature type="topological domain" description="Cytoplasmic" evidence="3">
    <location>
        <begin position="149"/>
        <end position="502"/>
    </location>
</feature>
<feature type="domain" description="GS" evidence="5">
    <location>
        <begin position="174"/>
        <end position="203"/>
    </location>
</feature>
<feature type="domain" description="Protein kinase" evidence="4">
    <location>
        <begin position="204"/>
        <end position="494"/>
    </location>
</feature>
<feature type="region of interest" description="Disordered" evidence="7">
    <location>
        <begin position="1"/>
        <end position="25"/>
    </location>
</feature>
<feature type="active site" description="Proton acceptor" evidence="4 6">
    <location>
        <position position="332"/>
    </location>
</feature>
<feature type="binding site" evidence="4">
    <location>
        <begin position="210"/>
        <end position="218"/>
    </location>
    <ligand>
        <name>ATP</name>
        <dbReference type="ChEBI" id="CHEBI:30616"/>
    </ligand>
</feature>
<feature type="binding site" evidence="4">
    <location>
        <position position="231"/>
    </location>
    <ligand>
        <name>ATP</name>
        <dbReference type="ChEBI" id="CHEBI:30616"/>
    </ligand>
</feature>
<feature type="disulfide bond" evidence="2">
    <location>
        <begin position="32"/>
        <end position="53"/>
    </location>
</feature>
<feature type="disulfide bond" evidence="2">
    <location>
        <begin position="34"/>
        <end position="38"/>
    </location>
</feature>
<feature type="disulfide bond" evidence="2">
    <location>
        <begin position="47"/>
        <end position="71"/>
    </location>
</feature>
<feature type="disulfide bond" evidence="2">
    <location>
        <begin position="81"/>
        <end position="95"/>
    </location>
</feature>
<feature type="disulfide bond" evidence="2">
    <location>
        <begin position="96"/>
        <end position="102"/>
    </location>
</feature>
<feature type="splice variant" id="VSP_045100" description="In isoform 2." evidence="19">
    <original>M</original>
    <variation>MGWLEELNWQLHIFLLILLSMHTRANFLDNM</variation>
    <location>
        <position position="1"/>
    </location>
</feature>
<feature type="sequence variant" id="VAR_075520" description="In AMD3; uncertain significance; mouse BMPR1B construct containing this mutation shows reduced GDF5-dependent receptor activation, mouse BMPR1B construct containing this mutation shows no loss of cell membrane localization; dbSNP:rs745854387." evidence="17">
    <original>R</original>
    <variation>C</variation>
    <location>
        <position position="31"/>
    </location>
</feature>
<feature type="sequence variant" id="VAR_041401" description="In a gastric adenocarcinoma sample; somatic mutation; dbSNP:rs200035802." evidence="11">
    <original>R</original>
    <variation>H</variation>
    <location>
        <position position="31"/>
    </location>
</feature>
<feature type="sequence variant" id="VAR_075521" description="In AMD3; mouse BMPR1B construct containing this mutation shows loss of GDF5-dependent receptor activation, chicken BMPR1B construct containing this mutation does not show reduced chondrocyte differentiation, mouse BMPR1B construct containing this mutation shows no loss of cell membrane localization; dbSNP:rs863225041." evidence="15">
    <original>C</original>
    <variation>R</variation>
    <location>
        <position position="53"/>
    </location>
</feature>
<feature type="sequence variant" id="VAR_041402" description="In dbSNP:rs34231464." evidence="11">
    <original>R</original>
    <variation>W</variation>
    <location>
        <position position="149"/>
    </location>
</feature>
<feature type="sequence variant" id="VAR_023819" description="In BDA2; in animal models loss of kinase activity and loss of positive regulation of chondrocyte differentiation; dbSNP:rs121434417." evidence="8">
    <original>I</original>
    <variation>K</variation>
    <location>
        <position position="200"/>
    </location>
</feature>
<feature type="sequence variant" id="VAR_041403" description="In dbSNP:rs35973133." evidence="11">
    <original>R</original>
    <variation>H</variation>
    <location>
        <position position="224"/>
    </location>
</feature>
<feature type="sequence variant" id="VAR_041404" description="In a metastatic melanoma sample; somatic mutation." evidence="11">
    <original>D</original>
    <variation>N</variation>
    <location>
        <position position="297"/>
    </location>
</feature>
<feature type="sequence variant" id="VAR_076406" description="In BDA1D; acts in a dominant-negative manner; dbSNP:rs869025614." evidence="16">
    <original>K</original>
    <variation>N</variation>
    <location>
        <position position="325"/>
    </location>
</feature>
<feature type="sequence variant" id="VAR_041405" description="In dbSNP:rs34970181." evidence="11">
    <original>R</original>
    <variation>Q</variation>
    <location>
        <position position="371"/>
    </location>
</feature>
<feature type="sequence variant" id="VAR_037967" description="In brachydactyly type C and BDA2; with also additional features of symphalangism-1; dbSNP:rs121434419." evidence="10">
    <original>R</original>
    <variation>Q</variation>
    <location>
        <position position="486"/>
    </location>
</feature>
<feature type="sequence variant" id="VAR_023820" description="In BDA2; in animal models no effect on kinase activity but strongly decreased positive regulation of chondrocyte differentiation; dbSNP:rs121434418." evidence="8">
    <original>R</original>
    <variation>W</variation>
    <location>
        <position position="486"/>
    </location>
</feature>
<feature type="helix" evidence="21">
    <location>
        <begin position="176"/>
        <end position="186"/>
    </location>
</feature>
<feature type="strand" evidence="21">
    <location>
        <begin position="190"/>
        <end position="192"/>
    </location>
</feature>
<feature type="helix" evidence="21">
    <location>
        <begin position="194"/>
        <end position="197"/>
    </location>
</feature>
<feature type="helix" evidence="21">
    <location>
        <begin position="200"/>
        <end position="203"/>
    </location>
</feature>
<feature type="strand" evidence="21">
    <location>
        <begin position="205"/>
        <end position="213"/>
    </location>
</feature>
<feature type="strand" evidence="21">
    <location>
        <begin position="216"/>
        <end position="223"/>
    </location>
</feature>
<feature type="strand" evidence="21">
    <location>
        <begin position="226"/>
        <end position="234"/>
    </location>
</feature>
<feature type="helix" evidence="21">
    <location>
        <begin position="235"/>
        <end position="237"/>
    </location>
</feature>
<feature type="helix" evidence="21">
    <location>
        <begin position="238"/>
        <end position="248"/>
    </location>
</feature>
<feature type="strand" evidence="21">
    <location>
        <begin position="261"/>
        <end position="268"/>
    </location>
</feature>
<feature type="helix" evidence="21">
    <location>
        <begin position="270"/>
        <end position="272"/>
    </location>
</feature>
<feature type="strand" evidence="21">
    <location>
        <begin position="274"/>
        <end position="279"/>
    </location>
</feature>
<feature type="helix" evidence="21">
    <location>
        <begin position="287"/>
        <end position="293"/>
    </location>
</feature>
<feature type="helix" evidence="21">
    <location>
        <begin position="298"/>
        <end position="316"/>
    </location>
</feature>
<feature type="strand" evidence="21">
    <location>
        <begin position="337"/>
        <end position="340"/>
    </location>
</feature>
<feature type="strand" evidence="21">
    <location>
        <begin position="346"/>
        <end position="348"/>
    </location>
</feature>
<feature type="helix" evidence="21">
    <location>
        <begin position="375"/>
        <end position="377"/>
    </location>
</feature>
<feature type="helix" evidence="21">
    <location>
        <begin position="380"/>
        <end position="383"/>
    </location>
</feature>
<feature type="helix" evidence="21">
    <location>
        <begin position="393"/>
        <end position="411"/>
    </location>
</feature>
<feature type="turn" evidence="21">
    <location>
        <begin position="426"/>
        <end position="430"/>
    </location>
</feature>
<feature type="helix" evidence="21">
    <location>
        <begin position="437"/>
        <end position="444"/>
    </location>
</feature>
<feature type="helix" evidence="21">
    <location>
        <begin position="455"/>
        <end position="459"/>
    </location>
</feature>
<feature type="helix" evidence="21">
    <location>
        <begin position="461"/>
        <end position="473"/>
    </location>
</feature>
<feature type="helix" evidence="21">
    <location>
        <begin position="478"/>
        <end position="480"/>
    </location>
</feature>
<feature type="helix" evidence="21">
    <location>
        <begin position="484"/>
        <end position="496"/>
    </location>
</feature>
<feature type="turn" evidence="21">
    <location>
        <begin position="497"/>
        <end position="499"/>
    </location>
</feature>
<keyword id="KW-0002">3D-structure</keyword>
<keyword id="KW-0025">Alternative splicing</keyword>
<keyword id="KW-0067">ATP-binding</keyword>
<keyword id="KW-1003">Cell membrane</keyword>
<keyword id="KW-0891">Chondrogenesis</keyword>
<keyword id="KW-0225">Disease variant</keyword>
<keyword id="KW-1015">Disulfide bond</keyword>
<keyword id="KW-0242">Dwarfism</keyword>
<keyword id="KW-0418">Kinase</keyword>
<keyword id="KW-0460">Magnesium</keyword>
<keyword id="KW-0464">Manganese</keyword>
<keyword id="KW-0472">Membrane</keyword>
<keyword id="KW-0479">Metal-binding</keyword>
<keyword id="KW-0547">Nucleotide-binding</keyword>
<keyword id="KW-1267">Proteomics identification</keyword>
<keyword id="KW-0675">Receptor</keyword>
<keyword id="KW-1185">Reference proteome</keyword>
<keyword id="KW-0723">Serine/threonine-protein kinase</keyword>
<keyword id="KW-0732">Signal</keyword>
<keyword id="KW-0808">Transferase</keyword>
<keyword id="KW-0812">Transmembrane</keyword>
<keyword id="KW-1133">Transmembrane helix</keyword>
<protein>
    <recommendedName>
        <fullName>Bone morphogenetic protein receptor type-1B</fullName>
        <shortName>BMP type-1B receptor</shortName>
        <shortName>BMPR-1B</shortName>
        <ecNumber evidence="2">2.7.11.30</ecNumber>
    </recommendedName>
    <cdAntigenName>CDw293</cdAntigenName>
</protein>
<name>BMR1B_HUMAN</name>
<accession>O00238</accession>
<accession>B2R953</accession>
<accession>B4DSV1</accession>
<accession>P78366</accession>
<sequence length="502" mass="56930">MLLRSAGKLNVGTKKEDGESTAPTPRPKVLRCKCHHHCPEDSVNNICSTDGYCFTMIEEDDSGLPVVTSGCLGLEGSDFQCRDTPIPHQRRSIECCTERNECNKDLHPTLPPLKNRDFVDGPIHHRALLISVTVCSLLLVLIILFCYFRYKRQETRPRYSIGLEQDETYIPPGESLRDLIEQSQSSGSGSGLPLLVQRTIAKQIQMVKQIGKGRYGEVWMGKWRGEKVAVKVFFTTEEASWFRETEIYQTVLMRHENILGFIAADIKGTGSWTQLYLITDYHENGSLYDYLKSTTLDAKSMLKLAYSSVSGLCHLHTEIFSTQGKPAIAHRDLKSKNILVKKNGTCCIADLGLAVKFISDTNEVDIPPNTRVGTKRYMPPEVLDESLNRNHFQSYIMADMYSFGLILWEVARRCVSGGIVEEYQLPYHDLVPSDPSYEDMREIVCIKKLRPSFPNRWSSDECLRQMGKLMTECWAHNPASRLTALRVKKTLAKMSESQDIKL</sequence>
<organism>
    <name type="scientific">Homo sapiens</name>
    <name type="common">Human</name>
    <dbReference type="NCBI Taxonomy" id="9606"/>
    <lineage>
        <taxon>Eukaryota</taxon>
        <taxon>Metazoa</taxon>
        <taxon>Chordata</taxon>
        <taxon>Craniata</taxon>
        <taxon>Vertebrata</taxon>
        <taxon>Euteleostomi</taxon>
        <taxon>Mammalia</taxon>
        <taxon>Eutheria</taxon>
        <taxon>Euarchontoglires</taxon>
        <taxon>Primates</taxon>
        <taxon>Haplorrhini</taxon>
        <taxon>Catarrhini</taxon>
        <taxon>Hominidae</taxon>
        <taxon>Homo</taxon>
    </lineage>
</organism>
<evidence type="ECO:0000250" key="1"/>
<evidence type="ECO:0000250" key="2">
    <source>
        <dbReference type="UniProtKB" id="P36898"/>
    </source>
</evidence>
<evidence type="ECO:0000255" key="3"/>
<evidence type="ECO:0000255" key="4">
    <source>
        <dbReference type="PROSITE-ProRule" id="PRU00159"/>
    </source>
</evidence>
<evidence type="ECO:0000255" key="5">
    <source>
        <dbReference type="PROSITE-ProRule" id="PRU00585"/>
    </source>
</evidence>
<evidence type="ECO:0000255" key="6">
    <source>
        <dbReference type="PROSITE-ProRule" id="PRU10027"/>
    </source>
</evidence>
<evidence type="ECO:0000256" key="7">
    <source>
        <dbReference type="SAM" id="MobiDB-lite"/>
    </source>
</evidence>
<evidence type="ECO:0000269" key="8">
    <source>
    </source>
</evidence>
<evidence type="ECO:0000269" key="9">
    <source>
    </source>
</evidence>
<evidence type="ECO:0000269" key="10">
    <source>
    </source>
</evidence>
<evidence type="ECO:0000269" key="11">
    <source>
    </source>
</evidence>
<evidence type="ECO:0000269" key="12">
    <source>
    </source>
</evidence>
<evidence type="ECO:0000269" key="13">
    <source>
    </source>
</evidence>
<evidence type="ECO:0000269" key="14">
    <source>
    </source>
</evidence>
<evidence type="ECO:0000269" key="15">
    <source>
    </source>
</evidence>
<evidence type="ECO:0000269" key="16">
    <source>
    </source>
</evidence>
<evidence type="ECO:0000269" key="17">
    <source>
    </source>
</evidence>
<evidence type="ECO:0000269" key="18">
    <source>
    </source>
</evidence>
<evidence type="ECO:0000303" key="19">
    <source>
    </source>
</evidence>
<evidence type="ECO:0000305" key="20"/>
<evidence type="ECO:0007829" key="21">
    <source>
        <dbReference type="PDB" id="3MDY"/>
    </source>
</evidence>
<gene>
    <name type="primary">BMPR1B</name>
</gene>
<comment type="function">
    <text evidence="2">On ligand binding, forms a receptor complex consisting of two type II and two type I transmembrane serine/threonine kinases. Type II receptors phosphorylate and activate type I receptors which autophosphorylate, then bind and activate SMAD transcriptional regulators. Receptor for BMP7/OP-1 and GDF5. Positively regulates chondrocyte differentiation through GDF5 interaction.</text>
</comment>
<comment type="catalytic activity">
    <reaction evidence="2">
        <text>L-threonyl-[receptor-protein] + ATP = O-phospho-L-threonyl-[receptor-protein] + ADP + H(+)</text>
        <dbReference type="Rhea" id="RHEA:44880"/>
        <dbReference type="Rhea" id="RHEA-COMP:11024"/>
        <dbReference type="Rhea" id="RHEA-COMP:11025"/>
        <dbReference type="ChEBI" id="CHEBI:15378"/>
        <dbReference type="ChEBI" id="CHEBI:30013"/>
        <dbReference type="ChEBI" id="CHEBI:30616"/>
        <dbReference type="ChEBI" id="CHEBI:61977"/>
        <dbReference type="ChEBI" id="CHEBI:456216"/>
        <dbReference type="EC" id="2.7.11.30"/>
    </reaction>
    <physiologicalReaction direction="left-to-right" evidence="2">
        <dbReference type="Rhea" id="RHEA:44881"/>
    </physiologicalReaction>
</comment>
<comment type="catalytic activity">
    <reaction evidence="2">
        <text>L-seryl-[receptor-protein] + ATP = O-phospho-L-seryl-[receptor-protein] + ADP + H(+)</text>
        <dbReference type="Rhea" id="RHEA:18673"/>
        <dbReference type="Rhea" id="RHEA-COMP:11022"/>
        <dbReference type="Rhea" id="RHEA-COMP:11023"/>
        <dbReference type="ChEBI" id="CHEBI:15378"/>
        <dbReference type="ChEBI" id="CHEBI:29999"/>
        <dbReference type="ChEBI" id="CHEBI:30616"/>
        <dbReference type="ChEBI" id="CHEBI:83421"/>
        <dbReference type="ChEBI" id="CHEBI:456216"/>
        <dbReference type="EC" id="2.7.11.30"/>
    </reaction>
    <physiologicalReaction direction="left-to-right" evidence="2">
        <dbReference type="Rhea" id="RHEA:18674"/>
    </physiologicalReaction>
</comment>
<comment type="cofactor">
    <cofactor evidence="1">
        <name>Mg(2+)</name>
        <dbReference type="ChEBI" id="CHEBI:18420"/>
    </cofactor>
    <cofactor evidence="1">
        <name>Mn(2+)</name>
        <dbReference type="ChEBI" id="CHEBI:29035"/>
    </cofactor>
</comment>
<comment type="subunit">
    <text evidence="13 14 18">Interacts with high affinity with GDF5; positively regulates chondrocyte differentiation (PubMed:24098149). Interacts with SCUBE3 (PubMed:33308444). Interacts with TSC22D1/TSC-22 (PubMed:21791611). Interacts with TGFBR3 (PubMed:19726563).</text>
</comment>
<comment type="interaction">
    <interactant intactId="EBI-7527193">
        <id>O00238</id>
    </interactant>
    <interactant intactId="EBI-1029262">
        <id>P12643</id>
        <label>BMP2</label>
    </interactant>
    <organismsDiffer>false</organismsDiffer>
    <experiments>3</experiments>
</comment>
<comment type="interaction">
    <interactant intactId="EBI-7527193">
        <id>O00238</id>
    </interactant>
    <interactant intactId="EBI-8571476">
        <id>P43026</id>
        <label>GDF5</label>
    </interactant>
    <organismsDiffer>false</organismsDiffer>
    <experiments>7</experiments>
</comment>
<comment type="subcellular location">
    <subcellularLocation>
        <location evidence="12">Cell membrane</location>
        <topology evidence="3">Single-pass type I membrane protein</topology>
    </subcellularLocation>
</comment>
<comment type="alternative products">
    <event type="alternative splicing"/>
    <isoform>
        <id>O00238-1</id>
        <name>1</name>
        <sequence type="displayed"/>
    </isoform>
    <isoform>
        <id>O00238-2</id>
        <name>2</name>
        <sequence type="described" ref="VSP_045100"/>
    </isoform>
</comment>
<comment type="PTM">
    <text evidence="2">Autophosphorylated.</text>
</comment>
<comment type="disease" evidence="9 15 17">
    <disease id="DI-00033">
        <name>Acromesomelic dysplasia 3</name>
        <acronym>AMD3</acronym>
        <description>A form of acromesomelic dysplasia, a skeletal disorder characterized by short stature, very short limbs and hand/foot malformations. The severity of limb abnormalities increases from proximal to distal with profoundly affected hands and feet showing brachydactyly and/or rudimentary fingers (knob-like fingers). AMD3 is an autosomal recessive form characterized by bilateral aplasia of the fibula, severe brachydactyly, and fusion of carpal and tarsal bones.</description>
        <dbReference type="MIM" id="609441"/>
    </disease>
    <text>The disease is caused by variants affecting the gene represented in this entry.</text>
</comment>
<comment type="disease" evidence="8 10">
    <disease id="DI-00195">
        <name>Brachydactyly A2</name>
        <acronym>BDA2</acronym>
        <description>A form of brachydactyly. Brachydactyly defines a group of inherited malformations characterized by shortening of the digits due to abnormal development of the phalanges and/or the metacarpals. In brachydactyly type A2 shortening of the middle phalanges is confined to the index finger and the second toe, all other digits being more or less normal. Because of a rhomboid or triangular shape of the affected middle phalanx, the end of the second finger usually deviates radially.</description>
        <dbReference type="MIM" id="112600"/>
    </disease>
    <text>The disease is caused by variants affecting the gene represented in this entry.</text>
</comment>
<comment type="disease" evidence="16">
    <disease id="DI-04670">
        <name>Brachydactyly A1, D</name>
        <acronym>BDA1D</acronym>
        <description>A form of brachydactyly type A1. Brachydactyly defines a group of inherited malformations characterized by shortening of the digits due to abnormal development of the phalanges and/or the metacarpals. Brachydactyly type A1 is characterized by middle phalanges of all the digits rudimentary or fused with the terminal phalanges. The proximal phalanges of the thumbs and big toes are short. BDA1D inheritance is autosomal dominant.</description>
        <dbReference type="MIM" id="616849"/>
    </disease>
    <text>The disease is caused by variants affecting the gene represented in this entry.</text>
</comment>
<comment type="similarity">
    <text evidence="20">Belongs to the protein kinase superfamily. TKL Ser/Thr protein kinase family. TGFB receptor subfamily.</text>
</comment>